<feature type="chain" id="PRO_0000086617" description="Serine/threonine-protein kinase-transforming protein Rmil">
    <location>
        <begin position="1"/>
        <end position="367"/>
    </location>
</feature>
<feature type="domain" description="Protein kinase" evidence="1">
    <location>
        <begin position="67"/>
        <end position="327"/>
    </location>
</feature>
<feature type="region of interest" description="Disordered" evidence="3">
    <location>
        <begin position="1"/>
        <end position="64"/>
    </location>
</feature>
<feature type="compositionally biased region" description="Basic and acidic residues" evidence="3">
    <location>
        <begin position="33"/>
        <end position="57"/>
    </location>
</feature>
<feature type="active site" description="Proton acceptor" evidence="1 2">
    <location>
        <position position="186"/>
    </location>
</feature>
<feature type="binding site" evidence="1">
    <location>
        <begin position="73"/>
        <end position="81"/>
    </location>
    <ligand>
        <name>ATP</name>
        <dbReference type="ChEBI" id="CHEBI:30616"/>
    </ligand>
</feature>
<feature type="binding site" evidence="1">
    <location>
        <position position="93"/>
    </location>
    <ligand>
        <name>ATP</name>
        <dbReference type="ChEBI" id="CHEBI:30616"/>
    </ligand>
</feature>
<sequence>EGGSTAGLSATPPASLPGSLTNVKALQKSPGPQRERKSSSSSEDRNRMKTLGRRDSSDDWEIPDGQITVGQRIGSGSFGTVYKGKWHGDVAVKMLNVTAPTPQQLQAFKNEVGVLRKTRHVNILLFMGYSTKPQLAIVTQWCEGSSLYHHLHIIETKFEMIKLIDIARQTAQGMDYLHAKSIIHRDLKSNNIFLHEDLTVKIGDFGLATVKSRWSGSHQFEQLSGSILWMAPEVIRMQDKNPYSFQSDVYAFGIVLYELMTGQLPYSNINNRDQIIFMVGRGYLSPDLSKVRSNCPKAMKRLMAECLKKKRDERPLFPQILASIELLARSLPKIHRSASEPSLNRAGFQTEDFSLYACASPKTPIQA</sequence>
<proteinExistence type="inferred from homology"/>
<name>RMIL_AVII1</name>
<organism>
    <name type="scientific">Avian retrovirus IC10</name>
    <dbReference type="NCBI Taxonomy" id="11874"/>
    <lineage>
        <taxon>Viruses</taxon>
        <taxon>Riboviria</taxon>
        <taxon>Pararnavirae</taxon>
        <taxon>Artverviricota</taxon>
        <taxon>Revtraviricetes</taxon>
        <taxon>Ortervirales</taxon>
        <taxon>Retroviridae</taxon>
        <taxon>Orthoretrovirinae</taxon>
        <taxon>Alpharetrovirus</taxon>
    </lineage>
</organism>
<evidence type="ECO:0000255" key="1">
    <source>
        <dbReference type="PROSITE-ProRule" id="PRU00159"/>
    </source>
</evidence>
<evidence type="ECO:0000255" key="2">
    <source>
        <dbReference type="PROSITE-ProRule" id="PRU10027"/>
    </source>
</evidence>
<evidence type="ECO:0000256" key="3">
    <source>
        <dbReference type="SAM" id="MobiDB-lite"/>
    </source>
</evidence>
<evidence type="ECO:0000305" key="4"/>
<comment type="catalytic activity">
    <reaction>
        <text>L-seryl-[protein] + ATP = O-phospho-L-seryl-[protein] + ADP + H(+)</text>
        <dbReference type="Rhea" id="RHEA:17989"/>
        <dbReference type="Rhea" id="RHEA-COMP:9863"/>
        <dbReference type="Rhea" id="RHEA-COMP:11604"/>
        <dbReference type="ChEBI" id="CHEBI:15378"/>
        <dbReference type="ChEBI" id="CHEBI:29999"/>
        <dbReference type="ChEBI" id="CHEBI:30616"/>
        <dbReference type="ChEBI" id="CHEBI:83421"/>
        <dbReference type="ChEBI" id="CHEBI:456216"/>
        <dbReference type="EC" id="2.7.11.1"/>
    </reaction>
</comment>
<comment type="catalytic activity">
    <reaction>
        <text>L-threonyl-[protein] + ATP = O-phospho-L-threonyl-[protein] + ADP + H(+)</text>
        <dbReference type="Rhea" id="RHEA:46608"/>
        <dbReference type="Rhea" id="RHEA-COMP:11060"/>
        <dbReference type="Rhea" id="RHEA-COMP:11605"/>
        <dbReference type="ChEBI" id="CHEBI:15378"/>
        <dbReference type="ChEBI" id="CHEBI:30013"/>
        <dbReference type="ChEBI" id="CHEBI:30616"/>
        <dbReference type="ChEBI" id="CHEBI:61977"/>
        <dbReference type="ChEBI" id="CHEBI:456216"/>
        <dbReference type="EC" id="2.7.11.1"/>
    </reaction>
</comment>
<comment type="miscellaneous">
    <text>This protein is synthesized as a Gag-Rmil polyprotein.</text>
</comment>
<comment type="similarity">
    <text evidence="4">Belongs to the protein kinase superfamily. TKL Ser/Thr protein kinase family. RAF subfamily.</text>
</comment>
<reference key="1">
    <citation type="journal article" date="1989" name="Nucleic Acids Res.">
        <title>Complete nucleotide sequence of IC10, a retrovirus containing the Rmil oncogene transduced in chicken neuroretina cells infected with avian retrovirus RAV-1.</title>
        <authorList>
            <person name="Eychene A."/>
            <person name="Marx M."/>
            <person name="Dezelee P."/>
            <person name="Calothy G."/>
        </authorList>
    </citation>
    <scope>NUCLEOTIDE SEQUENCE [GENOMIC DNA]</scope>
</reference>
<reference key="2">
    <citation type="journal article" date="1988" name="EMBO J.">
        <title>A novel oncogene related to c-mil is transduced in chicken neuroretina cells induced to proliferate by infection with an avian lymphomatosis virus.</title>
        <authorList>
            <person name="Marx M."/>
            <person name="Eychene A."/>
            <person name="Laugier D."/>
            <person name="Bechade C."/>
            <person name="Crisanti P."/>
            <person name="Dezelee P."/>
            <person name="Pessac B."/>
            <person name="Calothy G."/>
        </authorList>
    </citation>
    <scope>NUCLEOTIDE SEQUENCE [GENOMIC DNA]</scope>
</reference>
<dbReference type="EC" id="2.7.11.1"/>
<dbReference type="EMBL" id="X13744">
    <property type="protein sequence ID" value="CAA32008.1"/>
    <property type="status" value="ALT_SEQ"/>
    <property type="molecule type" value="Genomic_DNA"/>
</dbReference>
<dbReference type="EMBL" id="X13438">
    <property type="protein sequence ID" value="CAA31790.1"/>
    <property type="status" value="ALT_SEQ"/>
    <property type="molecule type" value="Genomic_DNA"/>
</dbReference>
<dbReference type="PIR" id="A43095">
    <property type="entry name" value="TVFVMI"/>
</dbReference>
<dbReference type="SMR" id="P10533"/>
<dbReference type="BRENDA" id="2.7.11.1">
    <property type="organism ID" value="596"/>
</dbReference>
<dbReference type="GO" id="GO:0005886">
    <property type="term" value="C:plasma membrane"/>
    <property type="evidence" value="ECO:0007669"/>
    <property type="project" value="TreeGrafter"/>
</dbReference>
<dbReference type="GO" id="GO:0005524">
    <property type="term" value="F:ATP binding"/>
    <property type="evidence" value="ECO:0007669"/>
    <property type="project" value="UniProtKB-KW"/>
</dbReference>
<dbReference type="GO" id="GO:0106310">
    <property type="term" value="F:protein serine kinase activity"/>
    <property type="evidence" value="ECO:0007669"/>
    <property type="project" value="RHEA"/>
</dbReference>
<dbReference type="GO" id="GO:0004674">
    <property type="term" value="F:protein serine/threonine kinase activity"/>
    <property type="evidence" value="ECO:0007669"/>
    <property type="project" value="UniProtKB-KW"/>
</dbReference>
<dbReference type="CDD" id="cd14062">
    <property type="entry name" value="STKc_Raf"/>
    <property type="match status" value="1"/>
</dbReference>
<dbReference type="FunFam" id="3.30.200.20:FF:000024">
    <property type="entry name" value="B-Raf proto-oncogene serine/threonine-protein kinase"/>
    <property type="match status" value="1"/>
</dbReference>
<dbReference type="FunFam" id="1.10.510.10:FF:000036">
    <property type="entry name" value="RAF proto-oncogene serine/threonine-protein kinase"/>
    <property type="match status" value="1"/>
</dbReference>
<dbReference type="Gene3D" id="3.30.200.20">
    <property type="entry name" value="Phosphorylase Kinase, domain 1"/>
    <property type="match status" value="1"/>
</dbReference>
<dbReference type="Gene3D" id="1.10.510.10">
    <property type="entry name" value="Transferase(Phosphotransferase) domain 1"/>
    <property type="match status" value="1"/>
</dbReference>
<dbReference type="InterPro" id="IPR011009">
    <property type="entry name" value="Kinase-like_dom_sf"/>
</dbReference>
<dbReference type="InterPro" id="IPR000719">
    <property type="entry name" value="Prot_kinase_dom"/>
</dbReference>
<dbReference type="InterPro" id="IPR017441">
    <property type="entry name" value="Protein_kinase_ATP_BS"/>
</dbReference>
<dbReference type="InterPro" id="IPR001245">
    <property type="entry name" value="Ser-Thr/Tyr_kinase_cat_dom"/>
</dbReference>
<dbReference type="InterPro" id="IPR008271">
    <property type="entry name" value="Ser/Thr_kinase_AS"/>
</dbReference>
<dbReference type="InterPro" id="IPR051681">
    <property type="entry name" value="Ser/Thr_Kinases-Pseudokinases"/>
</dbReference>
<dbReference type="PANTHER" id="PTHR44329">
    <property type="entry name" value="SERINE/THREONINE-PROTEIN KINASE TNNI3K-RELATED"/>
    <property type="match status" value="1"/>
</dbReference>
<dbReference type="PANTHER" id="PTHR44329:SF240">
    <property type="entry name" value="SERINE_THREONINE-PROTEIN KINASE B-RAF"/>
    <property type="match status" value="1"/>
</dbReference>
<dbReference type="Pfam" id="PF07714">
    <property type="entry name" value="PK_Tyr_Ser-Thr"/>
    <property type="match status" value="1"/>
</dbReference>
<dbReference type="SMART" id="SM00220">
    <property type="entry name" value="S_TKc"/>
    <property type="match status" value="1"/>
</dbReference>
<dbReference type="SUPFAM" id="SSF56112">
    <property type="entry name" value="Protein kinase-like (PK-like)"/>
    <property type="match status" value="1"/>
</dbReference>
<dbReference type="PROSITE" id="PS00107">
    <property type="entry name" value="PROTEIN_KINASE_ATP"/>
    <property type="match status" value="1"/>
</dbReference>
<dbReference type="PROSITE" id="PS50011">
    <property type="entry name" value="PROTEIN_KINASE_DOM"/>
    <property type="match status" value="1"/>
</dbReference>
<dbReference type="PROSITE" id="PS00108">
    <property type="entry name" value="PROTEIN_KINASE_ST"/>
    <property type="match status" value="1"/>
</dbReference>
<accession>P10533</accession>
<accession>Q85612</accession>
<accession>Q85613</accession>
<accession>Q85614</accession>
<protein>
    <recommendedName>
        <fullName>Serine/threonine-protein kinase-transforming protein Rmil</fullName>
        <ecNumber>2.7.11.1</ecNumber>
    </recommendedName>
</protein>
<gene>
    <name type="primary">V-RMIL</name>
</gene>
<organismHost>
    <name type="scientific">Galliformes</name>
    <dbReference type="NCBI Taxonomy" id="8976"/>
</organismHost>
<keyword id="KW-0067">ATP-binding</keyword>
<keyword id="KW-0418">Kinase</keyword>
<keyword id="KW-0547">Nucleotide-binding</keyword>
<keyword id="KW-0553">Oncogene</keyword>
<keyword id="KW-0723">Serine/threonine-protein kinase</keyword>
<keyword id="KW-0808">Transferase</keyword>